<protein>
    <recommendedName>
        <fullName evidence="1">Ubiquinone/menaquinone biosynthesis C-methyltransferase UbiE</fullName>
        <ecNumber evidence="1">2.1.1.163</ecNumber>
        <ecNumber evidence="1">2.1.1.201</ecNumber>
    </recommendedName>
    <alternativeName>
        <fullName evidence="1">2-methoxy-6-polyprenyl-1,4-benzoquinol methylase</fullName>
    </alternativeName>
    <alternativeName>
        <fullName evidence="1">Demethylmenaquinone methyltransferase</fullName>
    </alternativeName>
</protein>
<keyword id="KW-0474">Menaquinone biosynthesis</keyword>
<keyword id="KW-0489">Methyltransferase</keyword>
<keyword id="KW-0949">S-adenosyl-L-methionine</keyword>
<keyword id="KW-0808">Transferase</keyword>
<keyword id="KW-0831">Ubiquinone biosynthesis</keyword>
<dbReference type="EC" id="2.1.1.163" evidence="1"/>
<dbReference type="EC" id="2.1.1.201" evidence="1"/>
<dbReference type="EMBL" id="CP001661">
    <property type="protein sequence ID" value="ACT19392.1"/>
    <property type="molecule type" value="Genomic_DNA"/>
</dbReference>
<dbReference type="SMR" id="C6E4U6"/>
<dbReference type="STRING" id="443144.GM21_3367"/>
<dbReference type="KEGG" id="gem:GM21_3367"/>
<dbReference type="eggNOG" id="COG2226">
    <property type="taxonomic scope" value="Bacteria"/>
</dbReference>
<dbReference type="HOGENOM" id="CLU_037990_0_0_7"/>
<dbReference type="OrthoDB" id="9808140at2"/>
<dbReference type="UniPathway" id="UPA00079">
    <property type="reaction ID" value="UER00169"/>
</dbReference>
<dbReference type="UniPathway" id="UPA00232"/>
<dbReference type="GO" id="GO:0008425">
    <property type="term" value="F:2-methoxy-6-polyprenyl-1,4-benzoquinol methyltransferase activity"/>
    <property type="evidence" value="ECO:0007669"/>
    <property type="project" value="UniProtKB-EC"/>
</dbReference>
<dbReference type="GO" id="GO:0043770">
    <property type="term" value="F:demethylmenaquinone methyltransferase activity"/>
    <property type="evidence" value="ECO:0007669"/>
    <property type="project" value="UniProtKB-UniRule"/>
</dbReference>
<dbReference type="GO" id="GO:0009234">
    <property type="term" value="P:menaquinone biosynthetic process"/>
    <property type="evidence" value="ECO:0007669"/>
    <property type="project" value="UniProtKB-UniRule"/>
</dbReference>
<dbReference type="GO" id="GO:0032259">
    <property type="term" value="P:methylation"/>
    <property type="evidence" value="ECO:0007669"/>
    <property type="project" value="UniProtKB-KW"/>
</dbReference>
<dbReference type="CDD" id="cd02440">
    <property type="entry name" value="AdoMet_MTases"/>
    <property type="match status" value="1"/>
</dbReference>
<dbReference type="Gene3D" id="3.40.50.150">
    <property type="entry name" value="Vaccinia Virus protein VP39"/>
    <property type="match status" value="1"/>
</dbReference>
<dbReference type="HAMAP" id="MF_01813">
    <property type="entry name" value="MenG_UbiE_methyltr"/>
    <property type="match status" value="1"/>
</dbReference>
<dbReference type="InterPro" id="IPR029063">
    <property type="entry name" value="SAM-dependent_MTases_sf"/>
</dbReference>
<dbReference type="InterPro" id="IPR004033">
    <property type="entry name" value="UbiE/COQ5_MeTrFase"/>
</dbReference>
<dbReference type="InterPro" id="IPR023576">
    <property type="entry name" value="UbiE/COQ5_MeTrFase_CS"/>
</dbReference>
<dbReference type="NCBIfam" id="TIGR01934">
    <property type="entry name" value="MenG_MenH_UbiE"/>
    <property type="match status" value="1"/>
</dbReference>
<dbReference type="NCBIfam" id="NF001244">
    <property type="entry name" value="PRK00216.1-5"/>
    <property type="match status" value="1"/>
</dbReference>
<dbReference type="PANTHER" id="PTHR43591:SF24">
    <property type="entry name" value="2-METHOXY-6-POLYPRENYL-1,4-BENZOQUINOL METHYLASE, MITOCHONDRIAL"/>
    <property type="match status" value="1"/>
</dbReference>
<dbReference type="PANTHER" id="PTHR43591">
    <property type="entry name" value="METHYLTRANSFERASE"/>
    <property type="match status" value="1"/>
</dbReference>
<dbReference type="Pfam" id="PF01209">
    <property type="entry name" value="Ubie_methyltran"/>
    <property type="match status" value="1"/>
</dbReference>
<dbReference type="SUPFAM" id="SSF53335">
    <property type="entry name" value="S-adenosyl-L-methionine-dependent methyltransferases"/>
    <property type="match status" value="1"/>
</dbReference>
<dbReference type="PROSITE" id="PS51608">
    <property type="entry name" value="SAM_MT_UBIE"/>
    <property type="match status" value="1"/>
</dbReference>
<dbReference type="PROSITE" id="PS01183">
    <property type="entry name" value="UBIE_1"/>
    <property type="match status" value="1"/>
</dbReference>
<sequence>MYALSEKGERIRAMFGSIAPRYDLLNRLLSLGIDRRWRRFAVKKIGLNGAGRVLDVATGTGDVALEIASQTPASVSIVGIDFTPEMIELGRVKVKDSRHSGRITLEVAPCEEIPFDDGSFDAATISFGIRNVVDRIKGLTEMHRVLKGGGKIVILEFSTPTLPVFKDLYHFYFLKVLPKIGGAFSRFSAYQYLPDSVLEFPSRDVFKGMMTQVGFKDVRHFDLTGGIATVYVGTK</sequence>
<accession>C6E4U6</accession>
<feature type="chain" id="PRO_1000215985" description="Ubiquinone/menaquinone biosynthesis C-methyltransferase UbiE">
    <location>
        <begin position="1"/>
        <end position="235"/>
    </location>
</feature>
<feature type="binding site" evidence="1">
    <location>
        <position position="60"/>
    </location>
    <ligand>
        <name>S-adenosyl-L-methionine</name>
        <dbReference type="ChEBI" id="CHEBI:59789"/>
    </ligand>
</feature>
<feature type="binding site" evidence="1">
    <location>
        <position position="81"/>
    </location>
    <ligand>
        <name>S-adenosyl-L-methionine</name>
        <dbReference type="ChEBI" id="CHEBI:59789"/>
    </ligand>
</feature>
<feature type="binding site" evidence="1">
    <location>
        <position position="126"/>
    </location>
    <ligand>
        <name>S-adenosyl-L-methionine</name>
        <dbReference type="ChEBI" id="CHEBI:59789"/>
    </ligand>
</feature>
<proteinExistence type="inferred from homology"/>
<organism>
    <name type="scientific">Geobacter sp. (strain M21)</name>
    <dbReference type="NCBI Taxonomy" id="443144"/>
    <lineage>
        <taxon>Bacteria</taxon>
        <taxon>Pseudomonadati</taxon>
        <taxon>Thermodesulfobacteriota</taxon>
        <taxon>Desulfuromonadia</taxon>
        <taxon>Geobacterales</taxon>
        <taxon>Geobacteraceae</taxon>
        <taxon>Geobacter</taxon>
    </lineage>
</organism>
<gene>
    <name evidence="1" type="primary">ubiE</name>
    <name type="ordered locus">GM21_3367</name>
</gene>
<comment type="function">
    <text evidence="1">Methyltransferase required for the conversion of demethylmenaquinol (DMKH2) to menaquinol (MKH2) and the conversion of 2-polyprenyl-6-methoxy-1,4-benzoquinol (DDMQH2) to 2-polyprenyl-3-methyl-6-methoxy-1,4-benzoquinol (DMQH2).</text>
</comment>
<comment type="catalytic activity">
    <reaction evidence="1">
        <text>a 2-demethylmenaquinol + S-adenosyl-L-methionine = a menaquinol + S-adenosyl-L-homocysteine + H(+)</text>
        <dbReference type="Rhea" id="RHEA:42640"/>
        <dbReference type="Rhea" id="RHEA-COMP:9539"/>
        <dbReference type="Rhea" id="RHEA-COMP:9563"/>
        <dbReference type="ChEBI" id="CHEBI:15378"/>
        <dbReference type="ChEBI" id="CHEBI:18151"/>
        <dbReference type="ChEBI" id="CHEBI:55437"/>
        <dbReference type="ChEBI" id="CHEBI:57856"/>
        <dbReference type="ChEBI" id="CHEBI:59789"/>
        <dbReference type="EC" id="2.1.1.163"/>
    </reaction>
</comment>
<comment type="catalytic activity">
    <reaction evidence="1">
        <text>a 2-methoxy-6-(all-trans-polyprenyl)benzene-1,4-diol + S-adenosyl-L-methionine = a 5-methoxy-2-methyl-3-(all-trans-polyprenyl)benzene-1,4-diol + S-adenosyl-L-homocysteine + H(+)</text>
        <dbReference type="Rhea" id="RHEA:28286"/>
        <dbReference type="Rhea" id="RHEA-COMP:10858"/>
        <dbReference type="Rhea" id="RHEA-COMP:10859"/>
        <dbReference type="ChEBI" id="CHEBI:15378"/>
        <dbReference type="ChEBI" id="CHEBI:57856"/>
        <dbReference type="ChEBI" id="CHEBI:59789"/>
        <dbReference type="ChEBI" id="CHEBI:84166"/>
        <dbReference type="ChEBI" id="CHEBI:84167"/>
        <dbReference type="EC" id="2.1.1.201"/>
    </reaction>
</comment>
<comment type="pathway">
    <text evidence="1">Quinol/quinone metabolism; menaquinone biosynthesis; menaquinol from 1,4-dihydroxy-2-naphthoate: step 2/2.</text>
</comment>
<comment type="pathway">
    <text evidence="1">Cofactor biosynthesis; ubiquinone biosynthesis.</text>
</comment>
<comment type="similarity">
    <text evidence="1">Belongs to the class I-like SAM-binding methyltransferase superfamily. MenG/UbiE family.</text>
</comment>
<name>UBIE_GEOSM</name>
<evidence type="ECO:0000255" key="1">
    <source>
        <dbReference type="HAMAP-Rule" id="MF_01813"/>
    </source>
</evidence>
<reference key="1">
    <citation type="submission" date="2009-07" db="EMBL/GenBank/DDBJ databases">
        <title>Complete sequence of Geobacter sp. M21.</title>
        <authorList>
            <consortium name="US DOE Joint Genome Institute"/>
            <person name="Lucas S."/>
            <person name="Copeland A."/>
            <person name="Lapidus A."/>
            <person name="Glavina del Rio T."/>
            <person name="Dalin E."/>
            <person name="Tice H."/>
            <person name="Bruce D."/>
            <person name="Goodwin L."/>
            <person name="Pitluck S."/>
            <person name="Saunders E."/>
            <person name="Brettin T."/>
            <person name="Detter J.C."/>
            <person name="Han C."/>
            <person name="Larimer F."/>
            <person name="Land M."/>
            <person name="Hauser L."/>
            <person name="Kyrpides N."/>
            <person name="Ovchinnikova G."/>
            <person name="Lovley D."/>
        </authorList>
    </citation>
    <scope>NUCLEOTIDE SEQUENCE [LARGE SCALE GENOMIC DNA]</scope>
    <source>
        <strain>M21</strain>
    </source>
</reference>